<organism>
    <name type="scientific">Saccharomyces cerevisiae (strain ATCC 204508 / S288c)</name>
    <name type="common">Baker's yeast</name>
    <dbReference type="NCBI Taxonomy" id="559292"/>
    <lineage>
        <taxon>Eukaryota</taxon>
        <taxon>Fungi</taxon>
        <taxon>Dikarya</taxon>
        <taxon>Ascomycota</taxon>
        <taxon>Saccharomycotina</taxon>
        <taxon>Saccharomycetes</taxon>
        <taxon>Saccharomycetales</taxon>
        <taxon>Saccharomycetaceae</taxon>
        <taxon>Saccharomyces</taxon>
    </lineage>
</organism>
<reference key="1">
    <citation type="journal article" date="1994" name="EMBO J.">
        <title>Complete DNA sequence of yeast chromosome II.</title>
        <authorList>
            <person name="Feldmann H."/>
            <person name="Aigle M."/>
            <person name="Aljinovic G."/>
            <person name="Andre B."/>
            <person name="Baclet M.C."/>
            <person name="Barthe C."/>
            <person name="Baur A."/>
            <person name="Becam A.-M."/>
            <person name="Biteau N."/>
            <person name="Boles E."/>
            <person name="Brandt T."/>
            <person name="Brendel M."/>
            <person name="Brueckner M."/>
            <person name="Bussereau F."/>
            <person name="Christiansen C."/>
            <person name="Contreras R."/>
            <person name="Crouzet M."/>
            <person name="Cziepluch C."/>
            <person name="Demolis N."/>
            <person name="Delaveau T."/>
            <person name="Doignon F."/>
            <person name="Domdey H."/>
            <person name="Duesterhus S."/>
            <person name="Dubois E."/>
            <person name="Dujon B."/>
            <person name="El Bakkoury M."/>
            <person name="Entian K.-D."/>
            <person name="Feuermann M."/>
            <person name="Fiers W."/>
            <person name="Fobo G.M."/>
            <person name="Fritz C."/>
            <person name="Gassenhuber J."/>
            <person name="Glansdorff N."/>
            <person name="Goffeau A."/>
            <person name="Grivell L.A."/>
            <person name="de Haan M."/>
            <person name="Hein C."/>
            <person name="Herbert C.J."/>
            <person name="Hollenberg C.P."/>
            <person name="Holmstroem K."/>
            <person name="Jacq C."/>
            <person name="Jacquet M."/>
            <person name="Jauniaux J.-C."/>
            <person name="Jonniaux J.-L."/>
            <person name="Kallesoee T."/>
            <person name="Kiesau P."/>
            <person name="Kirchrath L."/>
            <person name="Koetter P."/>
            <person name="Korol S."/>
            <person name="Liebl S."/>
            <person name="Logghe M."/>
            <person name="Lohan A.J.E."/>
            <person name="Louis E.J."/>
            <person name="Li Z.Y."/>
            <person name="Maat M.J."/>
            <person name="Mallet L."/>
            <person name="Mannhaupt G."/>
            <person name="Messenguy F."/>
            <person name="Miosga T."/>
            <person name="Molemans F."/>
            <person name="Mueller S."/>
            <person name="Nasr F."/>
            <person name="Obermaier B."/>
            <person name="Perea J."/>
            <person name="Pierard A."/>
            <person name="Piravandi E."/>
            <person name="Pohl F.M."/>
            <person name="Pohl T.M."/>
            <person name="Potier S."/>
            <person name="Proft M."/>
            <person name="Purnelle B."/>
            <person name="Ramezani Rad M."/>
            <person name="Rieger M."/>
            <person name="Rose M."/>
            <person name="Schaaff-Gerstenschlaeger I."/>
            <person name="Scherens B."/>
            <person name="Schwarzlose C."/>
            <person name="Skala J."/>
            <person name="Slonimski P.P."/>
            <person name="Smits P.H.M."/>
            <person name="Souciet J.-L."/>
            <person name="Steensma H.Y."/>
            <person name="Stucka R."/>
            <person name="Urrestarazu L.A."/>
            <person name="van der Aart Q.J.M."/>
            <person name="Van Dyck L."/>
            <person name="Vassarotti A."/>
            <person name="Vetter I."/>
            <person name="Vierendeels F."/>
            <person name="Vissers S."/>
            <person name="Wagner G."/>
            <person name="de Wergifosse P."/>
            <person name="Wolfe K.H."/>
            <person name="Zagulski M."/>
            <person name="Zimmermann F.K."/>
            <person name="Mewes H.-W."/>
            <person name="Kleine K."/>
        </authorList>
    </citation>
    <scope>NUCLEOTIDE SEQUENCE [LARGE SCALE GENOMIC DNA]</scope>
    <source>
        <strain>ATCC 204508 / S288c</strain>
    </source>
</reference>
<reference key="2">
    <citation type="journal article" date="2014" name="G3 (Bethesda)">
        <title>The reference genome sequence of Saccharomyces cerevisiae: Then and now.</title>
        <authorList>
            <person name="Engel S.R."/>
            <person name="Dietrich F.S."/>
            <person name="Fisk D.G."/>
            <person name="Binkley G."/>
            <person name="Balakrishnan R."/>
            <person name="Costanzo M.C."/>
            <person name="Dwight S.S."/>
            <person name="Hitz B.C."/>
            <person name="Karra K."/>
            <person name="Nash R.S."/>
            <person name="Weng S."/>
            <person name="Wong E.D."/>
            <person name="Lloyd P."/>
            <person name="Skrzypek M.S."/>
            <person name="Miyasato S.R."/>
            <person name="Simison M."/>
            <person name="Cherry J.M."/>
        </authorList>
    </citation>
    <scope>GENOME REANNOTATION</scope>
    <source>
        <strain>ATCC 204508 / S288c</strain>
    </source>
</reference>
<gene>
    <name type="ordered locus">YBR178W</name>
    <name type="ORF">YBR1240</name>
</gene>
<dbReference type="EMBL" id="Z36046">
    <property type="protein sequence ID" value="CAA85139.1"/>
    <property type="molecule type" value="Genomic_DNA"/>
</dbReference>
<dbReference type="PIR" id="S46049">
    <property type="entry name" value="S46049"/>
</dbReference>
<dbReference type="SMR" id="P38296"/>
<dbReference type="DIP" id="DIP-4939N"/>
<dbReference type="IntAct" id="P38296">
    <property type="interactions" value="2"/>
</dbReference>
<dbReference type="PaxDb" id="4932-YBR178W"/>
<dbReference type="EnsemblFungi" id="YBR178W_mRNA">
    <property type="protein sequence ID" value="YBR178W"/>
    <property type="gene ID" value="YBR178W"/>
</dbReference>
<dbReference type="AGR" id="SGD:S000000382"/>
<dbReference type="SGD" id="S000000382">
    <property type="gene designation" value="YBR178W"/>
</dbReference>
<dbReference type="HOGENOM" id="CLU_2005697_0_0_1"/>
<feature type="chain" id="PRO_0000202504" description="Putative uncharacterized protein YBR178W">
    <location>
        <begin position="1"/>
        <end position="124"/>
    </location>
</feature>
<comment type="miscellaneous">
    <text evidence="1">Partially overlaps EHT1.</text>
</comment>
<comment type="caution">
    <text evidence="2">Product of a dubious gene prediction unlikely to encode a functional protein. Because of that it is not part of the S.cerevisiae S288c complete/reference proteome set.</text>
</comment>
<name>YB28_YEAST</name>
<protein>
    <recommendedName>
        <fullName>Putative uncharacterized protein YBR178W</fullName>
    </recommendedName>
</protein>
<evidence type="ECO:0000305" key="1"/>
<evidence type="ECO:0000305" key="2">
    <source>
    </source>
</evidence>
<proteinExistence type="uncertain"/>
<sequence>MEPFSPTICETVPLYPQWNGLIAGHLETSDISETFMSFVFYATTINVIIELKKLLILIINGGNTRGAITSRDIRYLTPFKICTCARFKKKKGSRNRNEIAHFSFRFRRFCKSLSRYTRVLLMFM</sequence>
<accession>P38296</accession>